<accession>P41616</accession>
<keyword id="KW-0150">Chloroplast</keyword>
<keyword id="KW-0249">Electron transport</keyword>
<keyword id="KW-0349">Heme</keyword>
<keyword id="KW-0408">Iron</keyword>
<keyword id="KW-0472">Membrane</keyword>
<keyword id="KW-0479">Metal-binding</keyword>
<keyword id="KW-0602">Photosynthesis</keyword>
<keyword id="KW-0604">Photosystem II</keyword>
<keyword id="KW-0934">Plastid</keyword>
<keyword id="KW-0793">Thylakoid</keyword>
<keyword id="KW-0812">Transmembrane</keyword>
<keyword id="KW-1133">Transmembrane helix</keyword>
<keyword id="KW-0813">Transport</keyword>
<name>PSBF_PINTH</name>
<sequence>MTIDRTYPIFTVRWLAVHGLAIPTVFFLGSISAMQFIQR</sequence>
<reference key="1">
    <citation type="journal article" date="1994" name="Proc. Natl. Acad. Sci. U.S.A.">
        <title>Loss of all ndh genes as determined by sequencing the entire chloroplast genome of the black pine Pinus thunbergii.</title>
        <authorList>
            <person name="Wakasugi T."/>
            <person name="Tsudzuki J."/>
            <person name="Ito S."/>
            <person name="Nakashima K."/>
            <person name="Tsudzuki T."/>
            <person name="Sugiura M."/>
        </authorList>
    </citation>
    <scope>NUCLEOTIDE SEQUENCE [LARGE SCALE GENOMIC DNA]</scope>
</reference>
<evidence type="ECO:0000255" key="1">
    <source>
        <dbReference type="HAMAP-Rule" id="MF_00643"/>
    </source>
</evidence>
<organism>
    <name type="scientific">Pinus thunbergii</name>
    <name type="common">Japanese black pine</name>
    <name type="synonym">Pinus thunbergiana</name>
    <dbReference type="NCBI Taxonomy" id="3350"/>
    <lineage>
        <taxon>Eukaryota</taxon>
        <taxon>Viridiplantae</taxon>
        <taxon>Streptophyta</taxon>
        <taxon>Embryophyta</taxon>
        <taxon>Tracheophyta</taxon>
        <taxon>Spermatophyta</taxon>
        <taxon>Pinopsida</taxon>
        <taxon>Pinidae</taxon>
        <taxon>Conifers I</taxon>
        <taxon>Pinales</taxon>
        <taxon>Pinaceae</taxon>
        <taxon>Pinus</taxon>
        <taxon>Pinus subgen. Pinus</taxon>
    </lineage>
</organism>
<comment type="function">
    <text evidence="1">This b-type cytochrome is tightly associated with the reaction center of photosystem II (PSII). PSII is a light-driven water:plastoquinone oxidoreductase that uses light energy to abstract electrons from H(2)O, generating O(2) and a proton gradient subsequently used for ATP formation. It consists of a core antenna complex that captures photons, and an electron transfer chain that converts photonic excitation into a charge separation.</text>
</comment>
<comment type="cofactor">
    <cofactor evidence="1">
        <name>heme b</name>
        <dbReference type="ChEBI" id="CHEBI:60344"/>
    </cofactor>
    <text evidence="1">With its partner (PsbE) binds heme. PSII binds additional chlorophylls, carotenoids and specific lipids.</text>
</comment>
<comment type="subunit">
    <text evidence="1">Heterodimer of an alpha subunit and a beta subunit. PSII is composed of 1 copy each of membrane proteins PsbA, PsbB, PsbC, PsbD, PsbE, PsbF, PsbH, PsbI, PsbJ, PsbK, PsbL, PsbM, PsbT, PsbX, PsbY, PsbZ, Psb30/Ycf12, at least 3 peripheral proteins of the oxygen-evolving complex and a large number of cofactors. It forms dimeric complexes.</text>
</comment>
<comment type="subcellular location">
    <subcellularLocation>
        <location evidence="1">Plastid</location>
        <location evidence="1">Chloroplast thylakoid membrane</location>
        <topology evidence="1">Single-pass membrane protein</topology>
    </subcellularLocation>
</comment>
<comment type="similarity">
    <text evidence="1">Belongs to the PsbE/PsbF family.</text>
</comment>
<geneLocation type="chloroplast"/>
<feature type="chain" id="PRO_0000200441" description="Cytochrome b559 subunit beta">
    <location>
        <begin position="1"/>
        <end position="39"/>
    </location>
</feature>
<feature type="transmembrane region" description="Helical" evidence="1">
    <location>
        <begin position="14"/>
        <end position="30"/>
    </location>
</feature>
<feature type="binding site" description="axial binding residue" evidence="1">
    <location>
        <position position="18"/>
    </location>
    <ligand>
        <name>heme</name>
        <dbReference type="ChEBI" id="CHEBI:30413"/>
        <note>ligand shared with alpha subunit</note>
    </ligand>
    <ligandPart>
        <name>Fe</name>
        <dbReference type="ChEBI" id="CHEBI:18248"/>
    </ligandPart>
</feature>
<gene>
    <name evidence="1" type="primary">psbF</name>
</gene>
<proteinExistence type="inferred from homology"/>
<protein>
    <recommendedName>
        <fullName evidence="1">Cytochrome b559 subunit beta</fullName>
    </recommendedName>
    <alternativeName>
        <fullName evidence="1">PSII reaction center subunit VI</fullName>
    </alternativeName>
</protein>
<dbReference type="EMBL" id="D17510">
    <property type="protein sequence ID" value="BAA04354.1"/>
    <property type="molecule type" value="Genomic_DNA"/>
</dbReference>
<dbReference type="PIR" id="T07476">
    <property type="entry name" value="T07476"/>
</dbReference>
<dbReference type="RefSeq" id="NP_042397.1">
    <property type="nucleotide sequence ID" value="NC_001631.1"/>
</dbReference>
<dbReference type="SMR" id="P41616"/>
<dbReference type="GeneID" id="808993"/>
<dbReference type="GO" id="GO:0009535">
    <property type="term" value="C:chloroplast thylakoid membrane"/>
    <property type="evidence" value="ECO:0007669"/>
    <property type="project" value="UniProtKB-SubCell"/>
</dbReference>
<dbReference type="GO" id="GO:0009539">
    <property type="term" value="C:photosystem II reaction center"/>
    <property type="evidence" value="ECO:0007669"/>
    <property type="project" value="InterPro"/>
</dbReference>
<dbReference type="GO" id="GO:0009055">
    <property type="term" value="F:electron transfer activity"/>
    <property type="evidence" value="ECO:0007669"/>
    <property type="project" value="UniProtKB-UniRule"/>
</dbReference>
<dbReference type="GO" id="GO:0020037">
    <property type="term" value="F:heme binding"/>
    <property type="evidence" value="ECO:0007669"/>
    <property type="project" value="InterPro"/>
</dbReference>
<dbReference type="GO" id="GO:0005506">
    <property type="term" value="F:iron ion binding"/>
    <property type="evidence" value="ECO:0007669"/>
    <property type="project" value="UniProtKB-UniRule"/>
</dbReference>
<dbReference type="GO" id="GO:0009767">
    <property type="term" value="P:photosynthetic electron transport chain"/>
    <property type="evidence" value="ECO:0007669"/>
    <property type="project" value="InterPro"/>
</dbReference>
<dbReference type="HAMAP" id="MF_00643">
    <property type="entry name" value="PSII_PsbF"/>
    <property type="match status" value="1"/>
</dbReference>
<dbReference type="InterPro" id="IPR006241">
    <property type="entry name" value="PSII_cyt_b559_bsu"/>
</dbReference>
<dbReference type="InterPro" id="IPR006216">
    <property type="entry name" value="PSII_cyt_b559_CS"/>
</dbReference>
<dbReference type="InterPro" id="IPR013081">
    <property type="entry name" value="PSII_cyt_b559_N"/>
</dbReference>
<dbReference type="NCBIfam" id="TIGR01333">
    <property type="entry name" value="cyt_b559_beta"/>
    <property type="match status" value="1"/>
</dbReference>
<dbReference type="Pfam" id="PF00283">
    <property type="entry name" value="Cytochrom_B559"/>
    <property type="match status" value="1"/>
</dbReference>
<dbReference type="PIRSF" id="PIRSF000037">
    <property type="entry name" value="PsbF"/>
    <property type="match status" value="1"/>
</dbReference>
<dbReference type="SUPFAM" id="SSF161045">
    <property type="entry name" value="Cytochrome b559 subunits"/>
    <property type="match status" value="1"/>
</dbReference>
<dbReference type="PROSITE" id="PS00537">
    <property type="entry name" value="CYTOCHROME_B559"/>
    <property type="match status" value="1"/>
</dbReference>